<protein>
    <recommendedName>
        <fullName evidence="1">8-amino-7-oxononanoate synthase</fullName>
        <shortName evidence="1">AONS</shortName>
        <ecNumber evidence="1">2.3.1.47</ecNumber>
    </recommendedName>
    <alternativeName>
        <fullName evidence="1">7-keto-8-amino-pelargonic acid synthase</fullName>
        <shortName evidence="1">7-KAP synthase</shortName>
        <shortName evidence="1">KAPA synthase</shortName>
    </alternativeName>
    <alternativeName>
        <fullName evidence="1">8-amino-7-ketopelargonate synthase</fullName>
    </alternativeName>
</protein>
<reference key="1">
    <citation type="journal article" date="2014" name="Stand. Genomic Sci.">
        <title>Complete genome sequence of Burkholderia phymatum STM815(T), a broad host range and efficient nitrogen-fixing symbiont of Mimosa species.</title>
        <authorList>
            <person name="Moulin L."/>
            <person name="Klonowska A."/>
            <person name="Caroline B."/>
            <person name="Booth K."/>
            <person name="Vriezen J.A."/>
            <person name="Melkonian R."/>
            <person name="James E.K."/>
            <person name="Young J.P."/>
            <person name="Bena G."/>
            <person name="Hauser L."/>
            <person name="Land M."/>
            <person name="Kyrpides N."/>
            <person name="Bruce D."/>
            <person name="Chain P."/>
            <person name="Copeland A."/>
            <person name="Pitluck S."/>
            <person name="Woyke T."/>
            <person name="Lizotte-Waniewski M."/>
            <person name="Bristow J."/>
            <person name="Riley M."/>
        </authorList>
    </citation>
    <scope>NUCLEOTIDE SEQUENCE [LARGE SCALE GENOMIC DNA]</scope>
    <source>
        <strain>DSM 17167 / CIP 108236 / LMG 21445 / STM815</strain>
    </source>
</reference>
<keyword id="KW-0002">3D-structure</keyword>
<keyword id="KW-0093">Biotin biosynthesis</keyword>
<keyword id="KW-0663">Pyridoxal phosphate</keyword>
<keyword id="KW-1185">Reference proteome</keyword>
<keyword id="KW-0808">Transferase</keyword>
<comment type="function">
    <text evidence="1">Catalyzes the decarboxylative condensation of pimeloyl-[acyl-carrier protein] and L-alanine to produce 8-amino-7-oxononanoate (AON), [acyl-carrier protein], and carbon dioxide.</text>
</comment>
<comment type="catalytic activity">
    <reaction evidence="1">
        <text>6-carboxyhexanoyl-[ACP] + L-alanine + H(+) = (8S)-8-amino-7-oxononanoate + holo-[ACP] + CO2</text>
        <dbReference type="Rhea" id="RHEA:42288"/>
        <dbReference type="Rhea" id="RHEA-COMP:9685"/>
        <dbReference type="Rhea" id="RHEA-COMP:9955"/>
        <dbReference type="ChEBI" id="CHEBI:15378"/>
        <dbReference type="ChEBI" id="CHEBI:16526"/>
        <dbReference type="ChEBI" id="CHEBI:57972"/>
        <dbReference type="ChEBI" id="CHEBI:64479"/>
        <dbReference type="ChEBI" id="CHEBI:78846"/>
        <dbReference type="ChEBI" id="CHEBI:149468"/>
        <dbReference type="EC" id="2.3.1.47"/>
    </reaction>
</comment>
<comment type="cofactor">
    <cofactor evidence="1">
        <name>pyridoxal 5'-phosphate</name>
        <dbReference type="ChEBI" id="CHEBI:597326"/>
    </cofactor>
</comment>
<comment type="pathway">
    <text evidence="1">Cofactor biosynthesis; biotin biosynthesis.</text>
</comment>
<comment type="subunit">
    <text evidence="1">Homodimer.</text>
</comment>
<comment type="similarity">
    <text evidence="1">Belongs to the class-II pyridoxal-phosphate-dependent aminotransferase family. BioF subfamily.</text>
</comment>
<evidence type="ECO:0000255" key="1">
    <source>
        <dbReference type="HAMAP-Rule" id="MF_01693"/>
    </source>
</evidence>
<evidence type="ECO:0007829" key="2">
    <source>
        <dbReference type="PDB" id="6ONN"/>
    </source>
</evidence>
<organism>
    <name type="scientific">Paraburkholderia phymatum (strain DSM 17167 / CIP 108236 / LMG 21445 / STM815)</name>
    <name type="common">Burkholderia phymatum</name>
    <dbReference type="NCBI Taxonomy" id="391038"/>
    <lineage>
        <taxon>Bacteria</taxon>
        <taxon>Pseudomonadati</taxon>
        <taxon>Pseudomonadota</taxon>
        <taxon>Betaproteobacteria</taxon>
        <taxon>Burkholderiales</taxon>
        <taxon>Burkholderiaceae</taxon>
        <taxon>Paraburkholderia</taxon>
    </lineage>
</organism>
<feature type="chain" id="PRO_0000380941" description="8-amino-7-oxononanoate synthase">
    <location>
        <begin position="1"/>
        <end position="394"/>
    </location>
</feature>
<feature type="binding site" evidence="1">
    <location>
        <position position="21"/>
    </location>
    <ligand>
        <name>substrate</name>
    </ligand>
</feature>
<feature type="binding site" evidence="1">
    <location>
        <begin position="112"/>
        <end position="113"/>
    </location>
    <ligand>
        <name>pyridoxal 5'-phosphate</name>
        <dbReference type="ChEBI" id="CHEBI:597326"/>
    </ligand>
</feature>
<feature type="binding site" evidence="1">
    <location>
        <position position="137"/>
    </location>
    <ligand>
        <name>substrate</name>
    </ligand>
</feature>
<feature type="binding site" evidence="1">
    <location>
        <position position="183"/>
    </location>
    <ligand>
        <name>pyridoxal 5'-phosphate</name>
        <dbReference type="ChEBI" id="CHEBI:597326"/>
    </ligand>
</feature>
<feature type="binding site" evidence="1">
    <location>
        <position position="211"/>
    </location>
    <ligand>
        <name>pyridoxal 5'-phosphate</name>
        <dbReference type="ChEBI" id="CHEBI:597326"/>
    </ligand>
</feature>
<feature type="binding site" evidence="1">
    <location>
        <position position="239"/>
    </location>
    <ligand>
        <name>pyridoxal 5'-phosphate</name>
        <dbReference type="ChEBI" id="CHEBI:597326"/>
    </ligand>
</feature>
<feature type="binding site" evidence="1">
    <location>
        <position position="358"/>
    </location>
    <ligand>
        <name>substrate</name>
    </ligand>
</feature>
<feature type="modified residue" description="N6-(pyridoxal phosphate)lysine" evidence="1">
    <location>
        <position position="242"/>
    </location>
</feature>
<feature type="helix" evidence="2">
    <location>
        <begin position="2"/>
        <end position="17"/>
    </location>
</feature>
<feature type="strand" evidence="2">
    <location>
        <begin position="24"/>
        <end position="26"/>
    </location>
</feature>
<feature type="strand" evidence="2">
    <location>
        <begin position="30"/>
        <end position="36"/>
    </location>
</feature>
<feature type="strand" evidence="2">
    <location>
        <begin position="39"/>
        <end position="43"/>
    </location>
</feature>
<feature type="helix" evidence="2">
    <location>
        <begin position="56"/>
        <end position="69"/>
    </location>
</feature>
<feature type="strand" evidence="2">
    <location>
        <begin position="77"/>
        <end position="79"/>
    </location>
</feature>
<feature type="helix" evidence="2">
    <location>
        <begin position="84"/>
        <end position="97"/>
    </location>
</feature>
<feature type="strand" evidence="2">
    <location>
        <begin position="101"/>
        <end position="111"/>
    </location>
</feature>
<feature type="helix" evidence="2">
    <location>
        <begin position="112"/>
        <end position="123"/>
    </location>
</feature>
<feature type="strand" evidence="2">
    <location>
        <begin position="128"/>
        <end position="133"/>
    </location>
</feature>
<feature type="helix" evidence="2">
    <location>
        <begin position="138"/>
        <end position="147"/>
    </location>
</feature>
<feature type="strand" evidence="2">
    <location>
        <begin position="150"/>
        <end position="154"/>
    </location>
</feature>
<feature type="helix" evidence="2">
    <location>
        <begin position="159"/>
        <end position="168"/>
    </location>
</feature>
<feature type="strand" evidence="2">
    <location>
        <begin position="172"/>
        <end position="181"/>
    </location>
</feature>
<feature type="turn" evidence="2">
    <location>
        <begin position="183"/>
        <end position="185"/>
    </location>
</feature>
<feature type="helix" evidence="2">
    <location>
        <begin position="191"/>
        <end position="201"/>
    </location>
</feature>
<feature type="strand" evidence="2">
    <location>
        <begin position="204"/>
        <end position="208"/>
    </location>
</feature>
<feature type="turn" evidence="2">
    <location>
        <begin position="210"/>
        <end position="215"/>
    </location>
</feature>
<feature type="helix" evidence="2">
    <location>
        <begin position="218"/>
        <end position="220"/>
    </location>
</feature>
<feature type="helix" evidence="2">
    <location>
        <begin position="223"/>
        <end position="227"/>
    </location>
</feature>
<feature type="strand" evidence="2">
    <location>
        <begin position="234"/>
        <end position="242"/>
    </location>
</feature>
<feature type="strand" evidence="2">
    <location>
        <begin position="249"/>
        <end position="254"/>
    </location>
</feature>
<feature type="helix" evidence="2">
    <location>
        <begin position="255"/>
        <end position="264"/>
    </location>
</feature>
<feature type="helix" evidence="2">
    <location>
        <begin position="267"/>
        <end position="270"/>
    </location>
</feature>
<feature type="helix" evidence="2">
    <location>
        <begin position="276"/>
        <end position="289"/>
    </location>
</feature>
<feature type="helix" evidence="2">
    <location>
        <begin position="292"/>
        <end position="314"/>
    </location>
</feature>
<feature type="strand" evidence="2">
    <location>
        <begin position="315"/>
        <end position="319"/>
    </location>
</feature>
<feature type="strand" evidence="2">
    <location>
        <begin position="323"/>
        <end position="333"/>
    </location>
</feature>
<feature type="helix" evidence="2">
    <location>
        <begin position="334"/>
        <end position="346"/>
    </location>
</feature>
<feature type="strand" evidence="2">
    <location>
        <begin position="364"/>
        <end position="369"/>
    </location>
</feature>
<feature type="helix" evidence="2">
    <location>
        <begin position="376"/>
        <end position="393"/>
    </location>
</feature>
<accession>B2JKH6</accession>
<proteinExistence type="evidence at protein level"/>
<name>BIOF_PARP8</name>
<gene>
    <name evidence="1" type="primary">bioF</name>
    <name type="ordered locus">Bphy_0172</name>
</gene>
<dbReference type="EC" id="2.3.1.47" evidence="1"/>
<dbReference type="EMBL" id="CP001043">
    <property type="protein sequence ID" value="ACC69365.1"/>
    <property type="molecule type" value="Genomic_DNA"/>
</dbReference>
<dbReference type="RefSeq" id="WP_012399594.1">
    <property type="nucleotide sequence ID" value="NC_010622.1"/>
</dbReference>
<dbReference type="PDB" id="6ONN">
    <property type="method" value="X-ray"/>
    <property type="resolution" value="1.80 A"/>
    <property type="chains" value="A/B=1-394"/>
</dbReference>
<dbReference type="PDBsum" id="6ONN"/>
<dbReference type="SMR" id="B2JKH6"/>
<dbReference type="STRING" id="391038.Bphy_0172"/>
<dbReference type="KEGG" id="bph:Bphy_0172"/>
<dbReference type="eggNOG" id="COG0156">
    <property type="taxonomic scope" value="Bacteria"/>
</dbReference>
<dbReference type="HOGENOM" id="CLU_015846_11_2_4"/>
<dbReference type="OrthoDB" id="9807157at2"/>
<dbReference type="UniPathway" id="UPA00078"/>
<dbReference type="Proteomes" id="UP000001192">
    <property type="component" value="Chromosome 1"/>
</dbReference>
<dbReference type="GO" id="GO:0008710">
    <property type="term" value="F:8-amino-7-oxononanoate synthase activity"/>
    <property type="evidence" value="ECO:0007669"/>
    <property type="project" value="UniProtKB-UniRule"/>
</dbReference>
<dbReference type="GO" id="GO:0030170">
    <property type="term" value="F:pyridoxal phosphate binding"/>
    <property type="evidence" value="ECO:0007669"/>
    <property type="project" value="UniProtKB-UniRule"/>
</dbReference>
<dbReference type="GO" id="GO:0009102">
    <property type="term" value="P:biotin biosynthetic process"/>
    <property type="evidence" value="ECO:0007669"/>
    <property type="project" value="UniProtKB-UniRule"/>
</dbReference>
<dbReference type="Gene3D" id="3.90.1150.10">
    <property type="entry name" value="Aspartate Aminotransferase, domain 1"/>
    <property type="match status" value="1"/>
</dbReference>
<dbReference type="Gene3D" id="3.40.640.10">
    <property type="entry name" value="Type I PLP-dependent aspartate aminotransferase-like (Major domain)"/>
    <property type="match status" value="1"/>
</dbReference>
<dbReference type="HAMAP" id="MF_01693">
    <property type="entry name" value="BioF_aminotrans_2"/>
    <property type="match status" value="1"/>
</dbReference>
<dbReference type="InterPro" id="IPR004839">
    <property type="entry name" value="Aminotransferase_I/II_large"/>
</dbReference>
<dbReference type="InterPro" id="IPR050087">
    <property type="entry name" value="AON_synthase_class-II"/>
</dbReference>
<dbReference type="InterPro" id="IPR004723">
    <property type="entry name" value="AONS_Archaea/Proteobacteria"/>
</dbReference>
<dbReference type="InterPro" id="IPR022834">
    <property type="entry name" value="AONS_Proteobacteria"/>
</dbReference>
<dbReference type="InterPro" id="IPR015424">
    <property type="entry name" value="PyrdxlP-dep_Trfase"/>
</dbReference>
<dbReference type="InterPro" id="IPR015421">
    <property type="entry name" value="PyrdxlP-dep_Trfase_major"/>
</dbReference>
<dbReference type="InterPro" id="IPR015422">
    <property type="entry name" value="PyrdxlP-dep_Trfase_small"/>
</dbReference>
<dbReference type="NCBIfam" id="TIGR00858">
    <property type="entry name" value="bioF"/>
    <property type="match status" value="1"/>
</dbReference>
<dbReference type="PANTHER" id="PTHR13693:SF100">
    <property type="entry name" value="8-AMINO-7-OXONONANOATE SYNTHASE"/>
    <property type="match status" value="1"/>
</dbReference>
<dbReference type="PANTHER" id="PTHR13693">
    <property type="entry name" value="CLASS II AMINOTRANSFERASE/8-AMINO-7-OXONONANOATE SYNTHASE"/>
    <property type="match status" value="1"/>
</dbReference>
<dbReference type="Pfam" id="PF00155">
    <property type="entry name" value="Aminotran_1_2"/>
    <property type="match status" value="1"/>
</dbReference>
<dbReference type="SUPFAM" id="SSF53383">
    <property type="entry name" value="PLP-dependent transferases"/>
    <property type="match status" value="1"/>
</dbReference>
<sequence length="394" mass="41743">MQLLDTLEQGLKEIDARGLRRRRRTVDSPCSAHMTVDGRNMIGFASNDYLGLAAHPLLVAAITEGARRYGAGSGGSHLLGGHSRAHAQLEDDLAEFAGGFVDNPRALYFSTGYMANLATLTALAGRGTTLFSDSLNHASLIDGARLSRADIQIYPHADAEALGAMLEASDAAVKLIVSDTVFSMDGDIAPLARLLELAEHHGAWLVVDDAHGFGVLGPQGRGAVAEAALRSPHLIVVGTLGKAAGVSGAFVVAHETVIEWLVQRARPYIFTTASVPSAAHAVSASLRIIGGDEGEHRRAHLRSLIALTRDMLKSTPWLPVDSHTAVQPLIIGSNEATLDVAASLDRANLWVPAIRPPTVPEGTSRLRISLSAAHSHNDLEQLEHALMKTAEARA</sequence>